<protein>
    <recommendedName>
        <fullName>1,3-beta-glucanosyltransferase gel4</fullName>
        <ecNumber>2.4.1.-</ecNumber>
    </recommendedName>
    <alternativeName>
        <fullName>Glucan elongating glucanosyltransferase 4</fullName>
    </alternativeName>
</protein>
<proteinExistence type="evidence at protein level"/>
<sequence>MKFVYAAAGASLVGSALATLPVIEAKVLKACCWTIALDANSYGNKFFYSNNGTEFFIRGVAYQQEYQANGTSTENSDYTDPLANVDNCKRDIPYLKQLRTNVIRTYAVDPTKDHDECMKLLDDAGIYLITDLSAPSESINRADPAWNTDLYKRYTSVIDAFAKYSNVIGFFAGNEVANDNNNTNSIAYVKAAVRDMKSYIKSKDYRSSLLVGYATDDDAHIRADLADYLVCGDKESSIDMFGYNIYEWCGDSSFEKSGYKDRTEEFSKYPVPAFFSEYGCIDPKPRKFTDVAALYGPQMNDVWSGGIVYMYFQEANDYGLVSVSGDNVKTKEDFSYLSVQMQKVTATGVNSASYTASNTAVPTCPSVGAKWEASNKLPPSPNSELCDCMVETLSCTVKDSVDEKEYGDLFDYLCAAGVCGGINSNSTSGDYGAYSVCSAKQKLSFVMNQYYKKNNKAATACDFDGKAQTKKGADASGSCASLISQAGTAGTGSVTAGATGSSGSGSASETSKGAAGVAASPMAVKVGNWQFGAYIATALFAGVGMLVL</sequence>
<name>GEL4_ASPFU</name>
<accession>P0C956</accession>
<accession>Q4WHH9</accession>
<comment type="function">
    <text evidence="1">Splits internally a 1,3-beta-glucan molecule and transfers the newly generated reducing end (the donor) to the non-reducing end of another 1,3-beta-glucan molecule (the acceptor) forming a 1,3-beta linkage, resulting in the elongation of 1,3-beta-glucan chains in the cell wall. Involved in cell wall morphogenesis (By similarity).</text>
</comment>
<comment type="subcellular location">
    <subcellularLocation>
        <location evidence="1">Cell membrane</location>
        <topology evidence="1">Lipid-anchor</topology>
        <topology evidence="1">GPI-anchor</topology>
    </subcellularLocation>
</comment>
<comment type="PTM">
    <text evidence="1">The GPI-like anchor contains a phosphoceramide lipid group.</text>
</comment>
<comment type="similarity">
    <text evidence="4">Belongs to the glycosyl hydrolase 72 family.</text>
</comment>
<reference key="1">
    <citation type="journal article" date="2005" name="Nature">
        <title>Genomic sequence of the pathogenic and allergenic filamentous fungus Aspergillus fumigatus.</title>
        <authorList>
            <person name="Nierman W.C."/>
            <person name="Pain A."/>
            <person name="Anderson M.J."/>
            <person name="Wortman J.R."/>
            <person name="Kim H.S."/>
            <person name="Arroyo J."/>
            <person name="Berriman M."/>
            <person name="Abe K."/>
            <person name="Archer D.B."/>
            <person name="Bermejo C."/>
            <person name="Bennett J.W."/>
            <person name="Bowyer P."/>
            <person name="Chen D."/>
            <person name="Collins M."/>
            <person name="Coulsen R."/>
            <person name="Davies R."/>
            <person name="Dyer P.S."/>
            <person name="Farman M.L."/>
            <person name="Fedorova N."/>
            <person name="Fedorova N.D."/>
            <person name="Feldblyum T.V."/>
            <person name="Fischer R."/>
            <person name="Fosker N."/>
            <person name="Fraser A."/>
            <person name="Garcia J.L."/>
            <person name="Garcia M.J."/>
            <person name="Goble A."/>
            <person name="Goldman G.H."/>
            <person name="Gomi K."/>
            <person name="Griffith-Jones S."/>
            <person name="Gwilliam R."/>
            <person name="Haas B.J."/>
            <person name="Haas H."/>
            <person name="Harris D.E."/>
            <person name="Horiuchi H."/>
            <person name="Huang J."/>
            <person name="Humphray S."/>
            <person name="Jimenez J."/>
            <person name="Keller N."/>
            <person name="Khouri H."/>
            <person name="Kitamoto K."/>
            <person name="Kobayashi T."/>
            <person name="Konzack S."/>
            <person name="Kulkarni R."/>
            <person name="Kumagai T."/>
            <person name="Lafton A."/>
            <person name="Latge J.-P."/>
            <person name="Li W."/>
            <person name="Lord A."/>
            <person name="Lu C."/>
            <person name="Majoros W.H."/>
            <person name="May G.S."/>
            <person name="Miller B.L."/>
            <person name="Mohamoud Y."/>
            <person name="Molina M."/>
            <person name="Monod M."/>
            <person name="Mouyna I."/>
            <person name="Mulligan S."/>
            <person name="Murphy L.D."/>
            <person name="O'Neil S."/>
            <person name="Paulsen I."/>
            <person name="Penalva M.A."/>
            <person name="Pertea M."/>
            <person name="Price C."/>
            <person name="Pritchard B.L."/>
            <person name="Quail M.A."/>
            <person name="Rabbinowitsch E."/>
            <person name="Rawlins N."/>
            <person name="Rajandream M.A."/>
            <person name="Reichard U."/>
            <person name="Renauld H."/>
            <person name="Robson G.D."/>
            <person name="Rodriguez de Cordoba S."/>
            <person name="Rodriguez-Pena J.M."/>
            <person name="Ronning C.M."/>
            <person name="Rutter S."/>
            <person name="Salzberg S.L."/>
            <person name="Sanchez M."/>
            <person name="Sanchez-Ferrero J.C."/>
            <person name="Saunders D."/>
            <person name="Seeger K."/>
            <person name="Squares R."/>
            <person name="Squares S."/>
            <person name="Takeuchi M."/>
            <person name="Tekaia F."/>
            <person name="Turner G."/>
            <person name="Vazquez de Aldana C.R."/>
            <person name="Weidman J."/>
            <person name="White O."/>
            <person name="Woodward J.R."/>
            <person name="Yu J.-H."/>
            <person name="Fraser C.M."/>
            <person name="Galagan J.E."/>
            <person name="Asai K."/>
            <person name="Machida M."/>
            <person name="Hall N."/>
            <person name="Barrell B.G."/>
            <person name="Denning D.W."/>
        </authorList>
    </citation>
    <scope>NUCLEOTIDE SEQUENCE [LARGE SCALE GENOMIC DNA]</scope>
    <source>
        <strain>ATCC MYA-4609 / CBS 101355 / FGSC A1100 / Af293</strain>
    </source>
</reference>
<keyword id="KW-0002">3D-structure</keyword>
<keyword id="KW-1003">Cell membrane</keyword>
<keyword id="KW-1015">Disulfide bond</keyword>
<keyword id="KW-0325">Glycoprotein</keyword>
<keyword id="KW-0336">GPI-anchor</keyword>
<keyword id="KW-0449">Lipoprotein</keyword>
<keyword id="KW-0472">Membrane</keyword>
<keyword id="KW-1185">Reference proteome</keyword>
<keyword id="KW-0732">Signal</keyword>
<keyword id="KW-0808">Transferase</keyword>
<gene>
    <name type="primary">gel4</name>
    <name type="ORF">AFUA_2G05340</name>
</gene>
<evidence type="ECO:0000250" key="1"/>
<evidence type="ECO:0000250" key="2">
    <source>
        <dbReference type="UniProtKB" id="Q06135"/>
    </source>
</evidence>
<evidence type="ECO:0000255" key="3"/>
<evidence type="ECO:0000305" key="4"/>
<evidence type="ECO:0007829" key="5">
    <source>
        <dbReference type="PDB" id="8PE1"/>
    </source>
</evidence>
<feature type="signal peptide" evidence="3">
    <location>
        <begin position="1"/>
        <end position="25"/>
    </location>
</feature>
<feature type="chain" id="PRO_0000245553" description="1,3-beta-glucanosyltransferase gel4">
    <location>
        <begin position="26"/>
        <end position="519"/>
    </location>
</feature>
<feature type="propeptide" id="PRO_0000245554" description="Removed in mature form" evidence="3">
    <location>
        <begin position="520"/>
        <end position="548"/>
    </location>
</feature>
<feature type="active site" description="Proton donor" evidence="1">
    <location>
        <position position="175"/>
    </location>
</feature>
<feature type="active site" description="Nucleophile" evidence="1">
    <location>
        <position position="277"/>
    </location>
</feature>
<feature type="binding site" evidence="2">
    <location>
        <position position="106"/>
    </location>
    <ligand>
        <name>(1,3-beta-D-glucosyl)n</name>
        <dbReference type="ChEBI" id="CHEBI:37671"/>
        <label>1</label>
        <note>donor substrate</note>
    </ligand>
</feature>
<feature type="binding site" evidence="2">
    <location>
        <begin position="133"/>
        <end position="141"/>
    </location>
    <ligand>
        <name>(1,3-beta-D-glucosyl)n</name>
        <dbReference type="ChEBI" id="CHEBI:37671"/>
        <label>1</label>
        <note>donor substrate</note>
    </ligand>
</feature>
<feature type="binding site" evidence="2">
    <location>
        <position position="174"/>
    </location>
    <ligand>
        <name>(1,3-beta-D-glucosyl)n</name>
        <dbReference type="ChEBI" id="CHEBI:37671"/>
        <label>1</label>
        <note>donor substrate</note>
    </ligand>
</feature>
<feature type="binding site" evidence="2">
    <location>
        <position position="175"/>
    </location>
    <ligand>
        <name>(1,3-beta-D-glucosyl)n</name>
        <dbReference type="ChEBI" id="CHEBI:37671"/>
        <label>2</label>
        <note>acceptor substrate</note>
    </ligand>
</feature>
<feature type="binding site" evidence="2">
    <location>
        <position position="217"/>
    </location>
    <ligand>
        <name>(1,3-beta-D-glucosyl)n</name>
        <dbReference type="ChEBI" id="CHEBI:37671"/>
        <label>2</label>
        <note>acceptor substrate</note>
    </ligand>
</feature>
<feature type="binding site" evidence="2">
    <location>
        <position position="222"/>
    </location>
    <ligand>
        <name>(1,3-beta-D-glucosyl)n</name>
        <dbReference type="ChEBI" id="CHEBI:37671"/>
        <label>2</label>
        <note>acceptor substrate</note>
    </ligand>
</feature>
<feature type="binding site" evidence="2">
    <location>
        <position position="309"/>
    </location>
    <ligand>
        <name>(1,3-beta-D-glucosyl)n</name>
        <dbReference type="ChEBI" id="CHEBI:37671"/>
        <label>1</label>
        <note>donor substrate</note>
    </ligand>
</feature>
<feature type="lipid moiety-binding region" description="GPI-like-anchor amidated alanine" evidence="3">
    <location>
        <position position="519"/>
    </location>
</feature>
<feature type="glycosylation site" description="N-linked (GlcNAc...) asparagine" evidence="3">
    <location>
        <position position="51"/>
    </location>
</feature>
<feature type="glycosylation site" description="N-linked (GlcNAc...) asparagine" evidence="3">
    <location>
        <position position="69"/>
    </location>
</feature>
<feature type="glycosylation site" description="N-linked (GlcNAc...) asparagine" evidence="3">
    <location>
        <position position="181"/>
    </location>
</feature>
<feature type="glycosylation site" description="N-linked (GlcNAc...) asparagine" evidence="3">
    <location>
        <position position="425"/>
    </location>
</feature>
<feature type="disulfide bond" evidence="2">
    <location>
        <begin position="88"/>
        <end position="117"/>
    </location>
</feature>
<feature type="disulfide bond" evidence="2">
    <location>
        <begin position="231"/>
        <end position="364"/>
    </location>
</feature>
<feature type="disulfide bond" evidence="2">
    <location>
        <begin position="249"/>
        <end position="280"/>
    </location>
</feature>
<feature type="disulfide bond" evidence="2">
    <location>
        <begin position="386"/>
        <end position="437"/>
    </location>
</feature>
<feature type="disulfide bond" evidence="2">
    <location>
        <begin position="395"/>
        <end position="461"/>
    </location>
</feature>
<feature type="disulfide bond" evidence="2">
    <location>
        <begin position="414"/>
        <end position="419"/>
    </location>
</feature>
<feature type="strand" evidence="5">
    <location>
        <begin position="23"/>
        <end position="26"/>
    </location>
</feature>
<feature type="strand" evidence="5">
    <location>
        <begin position="45"/>
        <end position="48"/>
    </location>
</feature>
<feature type="turn" evidence="5">
    <location>
        <begin position="49"/>
        <end position="51"/>
    </location>
</feature>
<feature type="strand" evidence="5">
    <location>
        <begin position="53"/>
        <end position="55"/>
    </location>
</feature>
<feature type="strand" evidence="5">
    <location>
        <begin position="57"/>
        <end position="61"/>
    </location>
</feature>
<feature type="helix" evidence="5">
    <location>
        <begin position="85"/>
        <end position="97"/>
    </location>
</feature>
<feature type="strand" evidence="5">
    <location>
        <begin position="102"/>
        <end position="106"/>
    </location>
</feature>
<feature type="helix" evidence="5">
    <location>
        <begin position="115"/>
        <end position="123"/>
    </location>
</feature>
<feature type="strand" evidence="5">
    <location>
        <begin position="127"/>
        <end position="132"/>
    </location>
</feature>
<feature type="strand" evidence="5">
    <location>
        <begin position="141"/>
        <end position="143"/>
    </location>
</feature>
<feature type="helix" evidence="5">
    <location>
        <begin position="148"/>
        <end position="161"/>
    </location>
</feature>
<feature type="strand" evidence="5">
    <location>
        <begin position="167"/>
        <end position="175"/>
    </location>
</feature>
<feature type="helix" evidence="5">
    <location>
        <begin position="180"/>
        <end position="185"/>
    </location>
</feature>
<feature type="helix" evidence="5">
    <location>
        <begin position="186"/>
        <end position="202"/>
    </location>
</feature>
<feature type="strand" evidence="5">
    <location>
        <begin position="210"/>
        <end position="216"/>
    </location>
</feature>
<feature type="turn" evidence="5">
    <location>
        <begin position="219"/>
        <end position="221"/>
    </location>
</feature>
<feature type="helix" evidence="5">
    <location>
        <begin position="222"/>
        <end position="230"/>
    </location>
</feature>
<feature type="helix" evidence="5">
    <location>
        <begin position="234"/>
        <end position="236"/>
    </location>
</feature>
<feature type="strand" evidence="5">
    <location>
        <begin position="241"/>
        <end position="244"/>
    </location>
</feature>
<feature type="turn" evidence="5">
    <location>
        <begin position="254"/>
        <end position="258"/>
    </location>
</feature>
<feature type="helix" evidence="5">
    <location>
        <begin position="259"/>
        <end position="266"/>
    </location>
</feature>
<feature type="strand" evidence="5">
    <location>
        <begin position="273"/>
        <end position="278"/>
    </location>
</feature>
<feature type="strand" evidence="5">
    <location>
        <begin position="282"/>
        <end position="284"/>
    </location>
</feature>
<feature type="helix" evidence="5">
    <location>
        <begin position="290"/>
        <end position="294"/>
    </location>
</feature>
<feature type="turn" evidence="5">
    <location>
        <begin position="297"/>
        <end position="302"/>
    </location>
</feature>
<feature type="strand" evidence="5">
    <location>
        <begin position="305"/>
        <end position="309"/>
    </location>
</feature>
<feature type="strand" evidence="5">
    <location>
        <begin position="320"/>
        <end position="324"/>
    </location>
</feature>
<feature type="strand" evidence="5">
    <location>
        <begin position="327"/>
        <end position="330"/>
    </location>
</feature>
<feature type="helix" evidence="5">
    <location>
        <begin position="332"/>
        <end position="341"/>
    </location>
</feature>
<feature type="turn" evidence="5">
    <location>
        <begin position="351"/>
        <end position="353"/>
    </location>
</feature>
<feature type="strand" evidence="5">
    <location>
        <begin position="368"/>
        <end position="370"/>
    </location>
</feature>
<feature type="helix" evidence="5">
    <location>
        <begin position="383"/>
        <end position="391"/>
    </location>
</feature>
<feature type="strand" evidence="5">
    <location>
        <begin position="394"/>
        <end position="397"/>
    </location>
</feature>
<feature type="helix" evidence="5">
    <location>
        <begin position="403"/>
        <end position="405"/>
    </location>
</feature>
<feature type="helix" evidence="5">
    <location>
        <begin position="406"/>
        <end position="415"/>
    </location>
</feature>
<feature type="helix" evidence="5">
    <location>
        <begin position="420"/>
        <end position="422"/>
    </location>
</feature>
<feature type="turn" evidence="5">
    <location>
        <begin position="426"/>
        <end position="429"/>
    </location>
</feature>
<feature type="helix" evidence="5">
    <location>
        <begin position="433"/>
        <end position="436"/>
    </location>
</feature>
<feature type="helix" evidence="5">
    <location>
        <begin position="439"/>
        <end position="453"/>
    </location>
</feature>
<feature type="turn" evidence="5">
    <location>
        <begin position="454"/>
        <end position="456"/>
    </location>
</feature>
<feature type="helix" evidence="5">
    <location>
        <begin position="458"/>
        <end position="460"/>
    </location>
</feature>
<feature type="turn" evidence="5">
    <location>
        <begin position="463"/>
        <end position="466"/>
    </location>
</feature>
<feature type="strand" evidence="5">
    <location>
        <begin position="467"/>
        <end position="469"/>
    </location>
</feature>
<feature type="helix" evidence="5">
    <location>
        <begin position="478"/>
        <end position="486"/>
    </location>
</feature>
<feature type="turn" evidence="5">
    <location>
        <begin position="487"/>
        <end position="490"/>
    </location>
</feature>
<organism>
    <name type="scientific">Aspergillus fumigatus (strain ATCC MYA-4609 / CBS 101355 / FGSC A1100 / Af293)</name>
    <name type="common">Neosartorya fumigata</name>
    <dbReference type="NCBI Taxonomy" id="330879"/>
    <lineage>
        <taxon>Eukaryota</taxon>
        <taxon>Fungi</taxon>
        <taxon>Dikarya</taxon>
        <taxon>Ascomycota</taxon>
        <taxon>Pezizomycotina</taxon>
        <taxon>Eurotiomycetes</taxon>
        <taxon>Eurotiomycetidae</taxon>
        <taxon>Eurotiales</taxon>
        <taxon>Aspergillaceae</taxon>
        <taxon>Aspergillus</taxon>
        <taxon>Aspergillus subgen. Fumigati</taxon>
    </lineage>
</organism>
<dbReference type="EC" id="2.4.1.-"/>
<dbReference type="EMBL" id="AAHF01000008">
    <property type="protein sequence ID" value="EAL87626.1"/>
    <property type="molecule type" value="Genomic_DNA"/>
</dbReference>
<dbReference type="RefSeq" id="XP_749664.1">
    <property type="nucleotide sequence ID" value="XM_744571.1"/>
</dbReference>
<dbReference type="PDB" id="8PE1">
    <property type="method" value="X-ray"/>
    <property type="resolution" value="1.90 A"/>
    <property type="chains" value="A/B=18-491"/>
</dbReference>
<dbReference type="PDB" id="8PE2">
    <property type="method" value="X-ray"/>
    <property type="resolution" value="2.05 A"/>
    <property type="chains" value="A=19-485"/>
</dbReference>
<dbReference type="PDBsum" id="8PE1"/>
<dbReference type="PDBsum" id="8PE2"/>
<dbReference type="SMR" id="P0C956"/>
<dbReference type="FunCoup" id="P0C956">
    <property type="interactions" value="149"/>
</dbReference>
<dbReference type="STRING" id="330879.P0C956"/>
<dbReference type="CAZy" id="CBM43">
    <property type="family name" value="Carbohydrate-Binding Module Family 43"/>
</dbReference>
<dbReference type="CAZy" id="GH72">
    <property type="family name" value="Glycoside Hydrolase Family 72"/>
</dbReference>
<dbReference type="GlyCosmos" id="P0C956">
    <property type="glycosylation" value="4 sites, No reported glycans"/>
</dbReference>
<dbReference type="EnsemblFungi" id="EAL87626">
    <property type="protein sequence ID" value="EAL87626"/>
    <property type="gene ID" value="AFUA_2G05340"/>
</dbReference>
<dbReference type="GeneID" id="3506753"/>
<dbReference type="KEGG" id="afm:AFUA_2G05340"/>
<dbReference type="eggNOG" id="ENOG502QPST">
    <property type="taxonomic scope" value="Eukaryota"/>
</dbReference>
<dbReference type="HOGENOM" id="CLU_021855_2_1_1"/>
<dbReference type="InParanoid" id="P0C956"/>
<dbReference type="OMA" id="WNAASKL"/>
<dbReference type="OrthoDB" id="421038at2759"/>
<dbReference type="Proteomes" id="UP000002530">
    <property type="component" value="Chromosome 2"/>
</dbReference>
<dbReference type="GO" id="GO:0009277">
    <property type="term" value="C:fungal-type cell wall"/>
    <property type="evidence" value="ECO:0000318"/>
    <property type="project" value="GO_Central"/>
</dbReference>
<dbReference type="GO" id="GO:0005886">
    <property type="term" value="C:plasma membrane"/>
    <property type="evidence" value="ECO:0007669"/>
    <property type="project" value="UniProtKB-SubCell"/>
</dbReference>
<dbReference type="GO" id="GO:0098552">
    <property type="term" value="C:side of membrane"/>
    <property type="evidence" value="ECO:0007669"/>
    <property type="project" value="UniProtKB-KW"/>
</dbReference>
<dbReference type="GO" id="GO:0042124">
    <property type="term" value="F:1,3-beta-glucanosyltransferase activity"/>
    <property type="evidence" value="ECO:0000318"/>
    <property type="project" value="GO_Central"/>
</dbReference>
<dbReference type="GO" id="GO:0071970">
    <property type="term" value="P:fungal-type cell wall (1-&gt;3)-beta-D-glucan biosynthetic process"/>
    <property type="evidence" value="ECO:0000318"/>
    <property type="project" value="GO_Central"/>
</dbReference>
<dbReference type="GO" id="GO:0031505">
    <property type="term" value="P:fungal-type cell wall organization"/>
    <property type="evidence" value="ECO:0000318"/>
    <property type="project" value="GO_Central"/>
</dbReference>
<dbReference type="FunFam" id="1.20.58.1040:FF:000005">
    <property type="entry name" value="1,3-beta-glucanosyltransferase"/>
    <property type="match status" value="1"/>
</dbReference>
<dbReference type="FunFam" id="3.20.20.80:FF:000038">
    <property type="entry name" value="1,3-beta-glucanosyltransferase"/>
    <property type="match status" value="1"/>
</dbReference>
<dbReference type="Gene3D" id="1.20.58.1040">
    <property type="match status" value="1"/>
</dbReference>
<dbReference type="Gene3D" id="3.20.20.80">
    <property type="entry name" value="Glycosidases"/>
    <property type="match status" value="1"/>
</dbReference>
<dbReference type="InterPro" id="IPR004886">
    <property type="entry name" value="Glucanosyltransferase"/>
</dbReference>
<dbReference type="InterPro" id="IPR017853">
    <property type="entry name" value="Glycoside_hydrolase_SF"/>
</dbReference>
<dbReference type="InterPro" id="IPR012946">
    <property type="entry name" value="X8"/>
</dbReference>
<dbReference type="PANTHER" id="PTHR31468:SF11">
    <property type="entry name" value="1,3-BETA-GLUCANOSYLTRANSFERASE"/>
    <property type="match status" value="1"/>
</dbReference>
<dbReference type="PANTHER" id="PTHR31468">
    <property type="entry name" value="1,3-BETA-GLUCANOSYLTRANSFERASE GAS1"/>
    <property type="match status" value="1"/>
</dbReference>
<dbReference type="Pfam" id="PF03198">
    <property type="entry name" value="Glyco_hydro_72"/>
    <property type="match status" value="1"/>
</dbReference>
<dbReference type="Pfam" id="PF07983">
    <property type="entry name" value="X8"/>
    <property type="match status" value="1"/>
</dbReference>
<dbReference type="SMART" id="SM00768">
    <property type="entry name" value="X8"/>
    <property type="match status" value="1"/>
</dbReference>
<dbReference type="SUPFAM" id="SSF51445">
    <property type="entry name" value="(Trans)glycosidases"/>
    <property type="match status" value="1"/>
</dbReference>